<dbReference type="EC" id="4.1.1.32" evidence="1"/>
<dbReference type="EMBL" id="AP010918">
    <property type="protein sequence ID" value="BAH24515.1"/>
    <property type="molecule type" value="Genomic_DNA"/>
</dbReference>
<dbReference type="RefSeq" id="WP_003401212.1">
    <property type="nucleotide sequence ID" value="NZ_CP014566.1"/>
</dbReference>
<dbReference type="SMR" id="C1AJN6"/>
<dbReference type="KEGG" id="mbt:JTY_0217"/>
<dbReference type="HOGENOM" id="CLU_028872_1_1_11"/>
<dbReference type="UniPathway" id="UPA00138"/>
<dbReference type="GO" id="GO:0005829">
    <property type="term" value="C:cytosol"/>
    <property type="evidence" value="ECO:0007669"/>
    <property type="project" value="TreeGrafter"/>
</dbReference>
<dbReference type="GO" id="GO:0005525">
    <property type="term" value="F:GTP binding"/>
    <property type="evidence" value="ECO:0007669"/>
    <property type="project" value="UniProtKB-UniRule"/>
</dbReference>
<dbReference type="GO" id="GO:0030145">
    <property type="term" value="F:manganese ion binding"/>
    <property type="evidence" value="ECO:0007669"/>
    <property type="project" value="UniProtKB-UniRule"/>
</dbReference>
<dbReference type="GO" id="GO:0004613">
    <property type="term" value="F:phosphoenolpyruvate carboxykinase (GTP) activity"/>
    <property type="evidence" value="ECO:0007669"/>
    <property type="project" value="UniProtKB-UniRule"/>
</dbReference>
<dbReference type="GO" id="GO:0071333">
    <property type="term" value="P:cellular response to glucose stimulus"/>
    <property type="evidence" value="ECO:0007669"/>
    <property type="project" value="TreeGrafter"/>
</dbReference>
<dbReference type="GO" id="GO:0006094">
    <property type="term" value="P:gluconeogenesis"/>
    <property type="evidence" value="ECO:0007669"/>
    <property type="project" value="UniProtKB-UniRule"/>
</dbReference>
<dbReference type="GO" id="GO:0046327">
    <property type="term" value="P:glycerol biosynthetic process from pyruvate"/>
    <property type="evidence" value="ECO:0007669"/>
    <property type="project" value="TreeGrafter"/>
</dbReference>
<dbReference type="GO" id="GO:0006107">
    <property type="term" value="P:oxaloacetate metabolic process"/>
    <property type="evidence" value="ECO:0007669"/>
    <property type="project" value="TreeGrafter"/>
</dbReference>
<dbReference type="GO" id="GO:0019543">
    <property type="term" value="P:propionate catabolic process"/>
    <property type="evidence" value="ECO:0007669"/>
    <property type="project" value="TreeGrafter"/>
</dbReference>
<dbReference type="GO" id="GO:0033993">
    <property type="term" value="P:response to lipid"/>
    <property type="evidence" value="ECO:0007669"/>
    <property type="project" value="TreeGrafter"/>
</dbReference>
<dbReference type="GO" id="GO:0042594">
    <property type="term" value="P:response to starvation"/>
    <property type="evidence" value="ECO:0007669"/>
    <property type="project" value="TreeGrafter"/>
</dbReference>
<dbReference type="CDD" id="cd00819">
    <property type="entry name" value="PEPCK_GTP"/>
    <property type="match status" value="1"/>
</dbReference>
<dbReference type="FunFam" id="3.40.449.10:FF:000005">
    <property type="entry name" value="Phosphoenolpyruvate carboxykinase [GTP]"/>
    <property type="match status" value="1"/>
</dbReference>
<dbReference type="Gene3D" id="3.90.228.20">
    <property type="match status" value="1"/>
</dbReference>
<dbReference type="Gene3D" id="3.40.449.10">
    <property type="entry name" value="Phosphoenolpyruvate Carboxykinase, domain 1"/>
    <property type="match status" value="1"/>
</dbReference>
<dbReference type="Gene3D" id="2.170.8.10">
    <property type="entry name" value="Phosphoenolpyruvate Carboxykinase, domain 2"/>
    <property type="match status" value="1"/>
</dbReference>
<dbReference type="HAMAP" id="MF_00452">
    <property type="entry name" value="PEPCK_GTP"/>
    <property type="match status" value="1"/>
</dbReference>
<dbReference type="InterPro" id="IPR018091">
    <property type="entry name" value="PEP_carboxykin_GTP_CS"/>
</dbReference>
<dbReference type="InterPro" id="IPR013035">
    <property type="entry name" value="PEP_carboxykinase_C"/>
</dbReference>
<dbReference type="InterPro" id="IPR008209">
    <property type="entry name" value="PEP_carboxykinase_GTP"/>
</dbReference>
<dbReference type="InterPro" id="IPR035077">
    <property type="entry name" value="PEP_carboxykinase_GTP_C"/>
</dbReference>
<dbReference type="InterPro" id="IPR035078">
    <property type="entry name" value="PEP_carboxykinase_GTP_N"/>
</dbReference>
<dbReference type="InterPro" id="IPR008210">
    <property type="entry name" value="PEP_carboxykinase_N"/>
</dbReference>
<dbReference type="NCBIfam" id="NF003253">
    <property type="entry name" value="PRK04210.1"/>
    <property type="match status" value="1"/>
</dbReference>
<dbReference type="PANTHER" id="PTHR11561">
    <property type="entry name" value="PHOSPHOENOLPYRUVATE CARBOXYKINASE"/>
    <property type="match status" value="1"/>
</dbReference>
<dbReference type="PANTHER" id="PTHR11561:SF0">
    <property type="entry name" value="PHOSPHOENOLPYRUVATE CARBOXYKINASE [GTP]-RELATED"/>
    <property type="match status" value="1"/>
</dbReference>
<dbReference type="Pfam" id="PF00821">
    <property type="entry name" value="PEPCK_GTP"/>
    <property type="match status" value="1"/>
</dbReference>
<dbReference type="Pfam" id="PF17297">
    <property type="entry name" value="PEPCK_N"/>
    <property type="match status" value="1"/>
</dbReference>
<dbReference type="PIRSF" id="PIRSF001348">
    <property type="entry name" value="PEP_carboxykinase_GTP"/>
    <property type="match status" value="1"/>
</dbReference>
<dbReference type="SUPFAM" id="SSF68923">
    <property type="entry name" value="PEP carboxykinase N-terminal domain"/>
    <property type="match status" value="1"/>
</dbReference>
<dbReference type="SUPFAM" id="SSF53795">
    <property type="entry name" value="PEP carboxykinase-like"/>
    <property type="match status" value="1"/>
</dbReference>
<dbReference type="PROSITE" id="PS00505">
    <property type="entry name" value="PEPCK_GTP"/>
    <property type="match status" value="1"/>
</dbReference>
<protein>
    <recommendedName>
        <fullName evidence="1">Phosphoenolpyruvate carboxykinase [GTP]</fullName>
        <shortName evidence="1">PEP carboxykinase</shortName>
        <shortName evidence="1">PEPCK</shortName>
        <ecNumber evidence="1">4.1.1.32</ecNumber>
    </recommendedName>
</protein>
<gene>
    <name evidence="1" type="primary">pckG</name>
    <name type="ordered locus">JTY_0217</name>
</gene>
<comment type="function">
    <text evidence="1">Catalyzes the conversion of oxaloacetate (OAA) to phosphoenolpyruvate (PEP), the rate-limiting step in the metabolic pathway that produces glucose from lactate and other precursors derived from the citric acid cycle.</text>
</comment>
<comment type="catalytic activity">
    <reaction evidence="1">
        <text>oxaloacetate + GTP = phosphoenolpyruvate + GDP + CO2</text>
        <dbReference type="Rhea" id="RHEA:10388"/>
        <dbReference type="ChEBI" id="CHEBI:16452"/>
        <dbReference type="ChEBI" id="CHEBI:16526"/>
        <dbReference type="ChEBI" id="CHEBI:37565"/>
        <dbReference type="ChEBI" id="CHEBI:58189"/>
        <dbReference type="ChEBI" id="CHEBI:58702"/>
        <dbReference type="EC" id="4.1.1.32"/>
    </reaction>
</comment>
<comment type="cofactor">
    <cofactor evidence="1">
        <name>Mn(2+)</name>
        <dbReference type="ChEBI" id="CHEBI:29035"/>
    </cofactor>
    <text evidence="1">Binds 1 Mn(2+) ion per subunit.</text>
</comment>
<comment type="pathway">
    <text evidence="1">Carbohydrate biosynthesis; gluconeogenesis.</text>
</comment>
<comment type="subunit">
    <text evidence="1">Monomer.</text>
</comment>
<comment type="subcellular location">
    <subcellularLocation>
        <location evidence="1">Cytoplasm</location>
    </subcellularLocation>
</comment>
<comment type="similarity">
    <text evidence="1">Belongs to the phosphoenolpyruvate carboxykinase [GTP] family.</text>
</comment>
<proteinExistence type="inferred from homology"/>
<feature type="chain" id="PRO_1000192344" description="Phosphoenolpyruvate carboxykinase [GTP]">
    <location>
        <begin position="1"/>
        <end position="606"/>
    </location>
</feature>
<feature type="active site" evidence="1">
    <location>
        <position position="273"/>
    </location>
</feature>
<feature type="binding site" evidence="1">
    <location>
        <position position="81"/>
    </location>
    <ligand>
        <name>substrate</name>
    </ligand>
</feature>
<feature type="binding site" evidence="1">
    <location>
        <begin position="220"/>
        <end position="222"/>
    </location>
    <ligand>
        <name>substrate</name>
    </ligand>
</feature>
<feature type="binding site" evidence="1">
    <location>
        <position position="229"/>
    </location>
    <ligand>
        <name>Mn(2+)</name>
        <dbReference type="ChEBI" id="CHEBI:29035"/>
    </ligand>
</feature>
<feature type="binding site" evidence="1">
    <location>
        <position position="249"/>
    </location>
    <ligand>
        <name>Mn(2+)</name>
        <dbReference type="ChEBI" id="CHEBI:29035"/>
    </ligand>
</feature>
<feature type="binding site" evidence="1">
    <location>
        <position position="271"/>
    </location>
    <ligand>
        <name>substrate</name>
    </ligand>
</feature>
<feature type="binding site" evidence="1">
    <location>
        <begin position="272"/>
        <end position="277"/>
    </location>
    <ligand>
        <name>GTP</name>
        <dbReference type="ChEBI" id="CHEBI:37565"/>
    </ligand>
</feature>
<feature type="binding site" evidence="1">
    <location>
        <position position="296"/>
    </location>
    <ligand>
        <name>Mn(2+)</name>
        <dbReference type="ChEBI" id="CHEBI:29035"/>
    </ligand>
</feature>
<feature type="binding site" evidence="1">
    <location>
        <begin position="387"/>
        <end position="389"/>
    </location>
    <ligand>
        <name>substrate</name>
    </ligand>
</feature>
<feature type="binding site" evidence="1">
    <location>
        <position position="389"/>
    </location>
    <ligand>
        <name>GTP</name>
        <dbReference type="ChEBI" id="CHEBI:37565"/>
    </ligand>
</feature>
<feature type="binding site" evidence="1">
    <location>
        <position position="420"/>
    </location>
    <ligand>
        <name>GTP</name>
        <dbReference type="ChEBI" id="CHEBI:37565"/>
    </ligand>
</feature>
<feature type="binding site" evidence="1">
    <location>
        <begin position="515"/>
        <end position="518"/>
    </location>
    <ligand>
        <name>GTP</name>
        <dbReference type="ChEBI" id="CHEBI:37565"/>
    </ligand>
</feature>
<reference key="1">
    <citation type="journal article" date="2009" name="Vaccine">
        <title>Whole genome sequence analysis of Mycobacterium bovis bacillus Calmette-Guerin (BCG) Tokyo 172: a comparative study of BCG vaccine substrains.</title>
        <authorList>
            <person name="Seki M."/>
            <person name="Honda I."/>
            <person name="Fujita I."/>
            <person name="Yano I."/>
            <person name="Yamamoto S."/>
            <person name="Koyama A."/>
        </authorList>
    </citation>
    <scope>NUCLEOTIDE SEQUENCE [LARGE SCALE GENOMIC DNA]</scope>
    <source>
        <strain>BCG / Tokyo 172 / ATCC 35737 / TMC 1019</strain>
    </source>
</reference>
<accession>C1AJN6</accession>
<sequence length="606" mass="67253">MTSATIPGLDTAPTNHQGLLSWVEEVAELTQPDRVVFTDGSEEEFQRLCDQLVEAGTFIRLNPEKHKNSYLALSDPSDVARVESRTYICSAKEIDAGPTNNWMDPGEMRSIMKDLYRGCMRGRTMYVVPFCMGPLGAEDPKLGVEITDSEYVVVSMRTMTRMGKAALEKMGDDGFFVKALHSVGAPLEPGQKDVAWPCSETKYITHFPETREIWSYGSGYGGNALLGKKCYSLRIASAMAHDEGWLAEHMLILKLISPENKAYYFAAAFPSACGKTNLAMLQPTIPGWRAETLGDDIAWMRFGKDGRLYAVNPEFGFFGVAPGTNWKSNPNAMRTIAAGNTVFTNVALTDDGDVWWEGLEGDPQHLIDWKGNDWYFRETETNAAHPNSRYCTPMSQCPILAPEWDDPQGVPISGILFGGRRKTTVPLVTEARDWQHGVFIGATLGSEQTAAAEGKVGNVRRDPMAMLPFLGYNVGDYFQHWINLGKHADESKLPKVFFVNWFRRGDDGRFLWPGFGENSRVLKWIVDRIEHKAGGATTPIGTVPAVEDLDLDGLDVDAADVAAALAVDADEWRQELPLIEEWLQFVGEKLPTGVKDEFDALKERLG</sequence>
<name>PCKG_MYCBT</name>
<keyword id="KW-0963">Cytoplasm</keyword>
<keyword id="KW-0210">Decarboxylase</keyword>
<keyword id="KW-0312">Gluconeogenesis</keyword>
<keyword id="KW-0342">GTP-binding</keyword>
<keyword id="KW-0456">Lyase</keyword>
<keyword id="KW-0464">Manganese</keyword>
<keyword id="KW-0479">Metal-binding</keyword>
<keyword id="KW-0547">Nucleotide-binding</keyword>
<organism>
    <name type="scientific">Mycobacterium bovis (strain BCG / Tokyo 172 / ATCC 35737 / TMC 1019)</name>
    <dbReference type="NCBI Taxonomy" id="561275"/>
    <lineage>
        <taxon>Bacteria</taxon>
        <taxon>Bacillati</taxon>
        <taxon>Actinomycetota</taxon>
        <taxon>Actinomycetes</taxon>
        <taxon>Mycobacteriales</taxon>
        <taxon>Mycobacteriaceae</taxon>
        <taxon>Mycobacterium</taxon>
        <taxon>Mycobacterium tuberculosis complex</taxon>
    </lineage>
</organism>
<evidence type="ECO:0000255" key="1">
    <source>
        <dbReference type="HAMAP-Rule" id="MF_00452"/>
    </source>
</evidence>